<name>MDTD_SALHS</name>
<proteinExistence type="inferred from homology"/>
<protein>
    <recommendedName>
        <fullName evidence="1">Putative multidrug resistance protein MdtD</fullName>
    </recommendedName>
</protein>
<gene>
    <name evidence="1" type="primary">mdtD</name>
    <name type="ordered locus">SeHA_C2359</name>
</gene>
<comment type="subcellular location">
    <subcellularLocation>
        <location evidence="1">Cell inner membrane</location>
        <topology evidence="1">Multi-pass membrane protein</topology>
    </subcellularLocation>
</comment>
<comment type="similarity">
    <text evidence="1">Belongs to the major facilitator superfamily. TCR/Tet family.</text>
</comment>
<organism>
    <name type="scientific">Salmonella heidelberg (strain SL476)</name>
    <dbReference type="NCBI Taxonomy" id="454169"/>
    <lineage>
        <taxon>Bacteria</taxon>
        <taxon>Pseudomonadati</taxon>
        <taxon>Pseudomonadota</taxon>
        <taxon>Gammaproteobacteria</taxon>
        <taxon>Enterobacterales</taxon>
        <taxon>Enterobacteriaceae</taxon>
        <taxon>Salmonella</taxon>
    </lineage>
</organism>
<evidence type="ECO:0000255" key="1">
    <source>
        <dbReference type="HAMAP-Rule" id="MF_01577"/>
    </source>
</evidence>
<dbReference type="EMBL" id="CP001120">
    <property type="protein sequence ID" value="ACF67005.1"/>
    <property type="molecule type" value="Genomic_DNA"/>
</dbReference>
<dbReference type="RefSeq" id="WP_000137830.1">
    <property type="nucleotide sequence ID" value="NC_011083.1"/>
</dbReference>
<dbReference type="SMR" id="B4T9U3"/>
<dbReference type="KEGG" id="seh:SeHA_C2359"/>
<dbReference type="HOGENOM" id="CLU_000960_28_0_6"/>
<dbReference type="Proteomes" id="UP000001866">
    <property type="component" value="Chromosome"/>
</dbReference>
<dbReference type="GO" id="GO:0005886">
    <property type="term" value="C:plasma membrane"/>
    <property type="evidence" value="ECO:0007669"/>
    <property type="project" value="UniProtKB-SubCell"/>
</dbReference>
<dbReference type="GO" id="GO:0022857">
    <property type="term" value="F:transmembrane transporter activity"/>
    <property type="evidence" value="ECO:0007669"/>
    <property type="project" value="UniProtKB-UniRule"/>
</dbReference>
<dbReference type="CDD" id="cd17503">
    <property type="entry name" value="MFS_LmrB_MDR_like"/>
    <property type="match status" value="1"/>
</dbReference>
<dbReference type="FunFam" id="1.20.1250.20:FF:000021">
    <property type="entry name" value="Putative multidrug resistance protein MdtD"/>
    <property type="match status" value="1"/>
</dbReference>
<dbReference type="FunFam" id="1.20.1720.10:FF:000001">
    <property type="entry name" value="Putative multidrug resistance protein MdtD"/>
    <property type="match status" value="1"/>
</dbReference>
<dbReference type="Gene3D" id="1.20.1250.20">
    <property type="entry name" value="MFS general substrate transporter like domains"/>
    <property type="match status" value="1"/>
</dbReference>
<dbReference type="Gene3D" id="1.20.1720.10">
    <property type="entry name" value="Multidrug resistance protein D"/>
    <property type="match status" value="1"/>
</dbReference>
<dbReference type="HAMAP" id="MF_01577">
    <property type="entry name" value="MFS_MdtD"/>
    <property type="match status" value="1"/>
</dbReference>
<dbReference type="InterPro" id="IPR011701">
    <property type="entry name" value="MFS"/>
</dbReference>
<dbReference type="InterPro" id="IPR020846">
    <property type="entry name" value="MFS_dom"/>
</dbReference>
<dbReference type="InterPro" id="IPR036259">
    <property type="entry name" value="MFS_trans_sf"/>
</dbReference>
<dbReference type="InterPro" id="IPR023721">
    <property type="entry name" value="Multi-R_MdtD"/>
</dbReference>
<dbReference type="NCBIfam" id="NF007799">
    <property type="entry name" value="PRK10504.1"/>
    <property type="match status" value="1"/>
</dbReference>
<dbReference type="PANTHER" id="PTHR42718:SF46">
    <property type="entry name" value="BLR6921 PROTEIN"/>
    <property type="match status" value="1"/>
</dbReference>
<dbReference type="PANTHER" id="PTHR42718">
    <property type="entry name" value="MAJOR FACILITATOR SUPERFAMILY MULTIDRUG TRANSPORTER MFSC"/>
    <property type="match status" value="1"/>
</dbReference>
<dbReference type="Pfam" id="PF07690">
    <property type="entry name" value="MFS_1"/>
    <property type="match status" value="1"/>
</dbReference>
<dbReference type="PRINTS" id="PR01036">
    <property type="entry name" value="TCRTETB"/>
</dbReference>
<dbReference type="SUPFAM" id="SSF103473">
    <property type="entry name" value="MFS general substrate transporter"/>
    <property type="match status" value="1"/>
</dbReference>
<dbReference type="PROSITE" id="PS50850">
    <property type="entry name" value="MFS"/>
    <property type="match status" value="1"/>
</dbReference>
<keyword id="KW-0997">Cell inner membrane</keyword>
<keyword id="KW-1003">Cell membrane</keyword>
<keyword id="KW-0472">Membrane</keyword>
<keyword id="KW-0812">Transmembrane</keyword>
<keyword id="KW-1133">Transmembrane helix</keyword>
<keyword id="KW-0813">Transport</keyword>
<reference key="1">
    <citation type="journal article" date="2011" name="J. Bacteriol.">
        <title>Comparative genomics of 28 Salmonella enterica isolates: evidence for CRISPR-mediated adaptive sublineage evolution.</title>
        <authorList>
            <person name="Fricke W.F."/>
            <person name="Mammel M.K."/>
            <person name="McDermott P.F."/>
            <person name="Tartera C."/>
            <person name="White D.G."/>
            <person name="Leclerc J.E."/>
            <person name="Ravel J."/>
            <person name="Cebula T.A."/>
        </authorList>
    </citation>
    <scope>NUCLEOTIDE SEQUENCE [LARGE SCALE GENOMIC DNA]</scope>
    <source>
        <strain>SL476</strain>
    </source>
</reference>
<feature type="chain" id="PRO_0000365286" description="Putative multidrug resistance protein MdtD">
    <location>
        <begin position="1"/>
        <end position="470"/>
    </location>
</feature>
<feature type="topological domain" description="Periplasmic" evidence="1">
    <location>
        <begin position="1"/>
        <end position="11"/>
    </location>
</feature>
<feature type="transmembrane region" description="Helical" evidence="1">
    <location>
        <begin position="12"/>
        <end position="32"/>
    </location>
</feature>
<feature type="topological domain" description="Cytoplasmic" evidence="1">
    <location>
        <begin position="33"/>
        <end position="48"/>
    </location>
</feature>
<feature type="transmembrane region" description="Helical" evidence="1">
    <location>
        <begin position="49"/>
        <end position="69"/>
    </location>
</feature>
<feature type="topological domain" description="Periplasmic" evidence="1">
    <location>
        <begin position="70"/>
        <end position="76"/>
    </location>
</feature>
<feature type="transmembrane region" description="Helical" evidence="1">
    <location>
        <begin position="77"/>
        <end position="97"/>
    </location>
</feature>
<feature type="topological domain" description="Cytoplasmic" evidence="1">
    <location>
        <begin position="98"/>
        <end position="101"/>
    </location>
</feature>
<feature type="transmembrane region" description="Helical" evidence="1">
    <location>
        <begin position="102"/>
        <end position="124"/>
    </location>
</feature>
<feature type="topological domain" description="Periplasmic" evidence="1">
    <location>
        <begin position="125"/>
        <end position="137"/>
    </location>
</feature>
<feature type="transmembrane region" description="Helical" evidence="1">
    <location>
        <begin position="138"/>
        <end position="158"/>
    </location>
</feature>
<feature type="topological domain" description="Cytoplasmic" evidence="1">
    <location>
        <begin position="159"/>
        <end position="164"/>
    </location>
</feature>
<feature type="transmembrane region" description="Helical" evidence="1">
    <location>
        <begin position="165"/>
        <end position="185"/>
    </location>
</feature>
<feature type="topological domain" description="Periplasmic" evidence="1">
    <location>
        <begin position="186"/>
        <end position="196"/>
    </location>
</feature>
<feature type="transmembrane region" description="Helical" evidence="1">
    <location>
        <begin position="197"/>
        <end position="217"/>
    </location>
</feature>
<feature type="topological domain" description="Cytoplasmic" evidence="1">
    <location>
        <begin position="218"/>
        <end position="221"/>
    </location>
</feature>
<feature type="transmembrane region" description="Helical" evidence="1">
    <location>
        <begin position="222"/>
        <end position="242"/>
    </location>
</feature>
<feature type="topological domain" description="Periplasmic" evidence="1">
    <location>
        <begin position="243"/>
        <end position="262"/>
    </location>
</feature>
<feature type="transmembrane region" description="Helical" evidence="1">
    <location>
        <begin position="263"/>
        <end position="283"/>
    </location>
</feature>
<feature type="topological domain" description="Cytoplasmic" evidence="1">
    <location>
        <begin position="284"/>
        <end position="285"/>
    </location>
</feature>
<feature type="transmembrane region" description="Helical" evidence="1">
    <location>
        <begin position="286"/>
        <end position="306"/>
    </location>
</feature>
<feature type="topological domain" description="Periplasmic" evidence="1">
    <location>
        <begin position="307"/>
        <end position="341"/>
    </location>
</feature>
<feature type="transmembrane region" description="Helical" evidence="1">
    <location>
        <begin position="342"/>
        <end position="362"/>
    </location>
</feature>
<feature type="topological domain" description="Cytoplasmic" evidence="1">
    <location>
        <begin position="363"/>
        <end position="395"/>
    </location>
</feature>
<feature type="transmembrane region" description="Helical" evidence="1">
    <location>
        <begin position="396"/>
        <end position="416"/>
    </location>
</feature>
<feature type="topological domain" description="Periplasmic" evidence="1">
    <location>
        <begin position="417"/>
        <end position="430"/>
    </location>
</feature>
<feature type="transmembrane region" description="Helical" evidence="1">
    <location>
        <begin position="431"/>
        <end position="451"/>
    </location>
</feature>
<feature type="topological domain" description="Cytoplasmic" evidence="1">
    <location>
        <begin position="452"/>
        <end position="470"/>
    </location>
</feature>
<accession>B4T9U3</accession>
<sequence length="470" mass="50712">MTELPDNTRWQLWIVALGFFMQSLDTTIVNTALPSMAKSLGESPLHMHMVVVSYVLTVAVMLPASGWLADKIGVRNIFFAAIVLFTLGSLFCALSGTLNQLVLARVLQGVGGAMMVPVGRLTVMKIVPRAQYMAAMTFVTLPGQIGPLLGPALGGVLVEYASWHWIFLINIPVGIVGAMATFMLMPNYTIETRRFDLPGFLLLAIGMAVLTLALDGSKSMGISPWTLAGLAAGGAAAILLYLLHAKKNSGALFSLRLFRTPTFSLGLLGSFAGRIGSGMLPFMTPVFLQIGLGFSPFHAGLMMIPMVLGSMGMKRIVVQIVNRFGYRRVLVATTLGLALVSLLFMSVALLGWYYLLPLVLLLQGMVNSARFSSMNTLTLKDLPDTLASSGNSLLSMIMQLSMSIGVTIAGMLLGMFGQQHIGIDSSATHHVFMYTWLCMAVIIALPAIIFARVPNDTQQNMVISRRKRSL</sequence>